<feature type="chain" id="PRO_1000018721" description="Phosphoribosylaminoimidazole-succinocarboxamide synthase">
    <location>
        <begin position="1"/>
        <end position="312"/>
    </location>
</feature>
<keyword id="KW-0067">ATP-binding</keyword>
<keyword id="KW-0436">Ligase</keyword>
<keyword id="KW-0547">Nucleotide-binding</keyword>
<keyword id="KW-0658">Purine biosynthesis</keyword>
<gene>
    <name evidence="1" type="primary">purC</name>
    <name type="ordered locus">lpl1640</name>
</gene>
<accession>Q5WW20</accession>
<dbReference type="EC" id="6.3.2.6" evidence="1"/>
<dbReference type="EMBL" id="CR628337">
    <property type="protein sequence ID" value="CAH15880.1"/>
    <property type="molecule type" value="Genomic_DNA"/>
</dbReference>
<dbReference type="SMR" id="Q5WW20"/>
<dbReference type="KEGG" id="lpf:lpl1640"/>
<dbReference type="LegioList" id="lpl1640"/>
<dbReference type="HOGENOM" id="CLU_045637_0_1_6"/>
<dbReference type="UniPathway" id="UPA00074">
    <property type="reaction ID" value="UER00131"/>
</dbReference>
<dbReference type="Proteomes" id="UP000002517">
    <property type="component" value="Chromosome"/>
</dbReference>
<dbReference type="GO" id="GO:0005737">
    <property type="term" value="C:cytoplasm"/>
    <property type="evidence" value="ECO:0007669"/>
    <property type="project" value="TreeGrafter"/>
</dbReference>
<dbReference type="GO" id="GO:0005524">
    <property type="term" value="F:ATP binding"/>
    <property type="evidence" value="ECO:0007669"/>
    <property type="project" value="UniProtKB-KW"/>
</dbReference>
<dbReference type="GO" id="GO:0004639">
    <property type="term" value="F:phosphoribosylaminoimidazolesuccinocarboxamide synthase activity"/>
    <property type="evidence" value="ECO:0007669"/>
    <property type="project" value="UniProtKB-UniRule"/>
</dbReference>
<dbReference type="GO" id="GO:0006189">
    <property type="term" value="P:'de novo' IMP biosynthetic process"/>
    <property type="evidence" value="ECO:0007669"/>
    <property type="project" value="UniProtKB-UniRule"/>
</dbReference>
<dbReference type="CDD" id="cd01414">
    <property type="entry name" value="SAICAR_synt_Sc"/>
    <property type="match status" value="1"/>
</dbReference>
<dbReference type="FunFam" id="3.30.200.20:FF:000199">
    <property type="entry name" value="Phosphoribosylaminoimidazole-succinocarboxamide synthase"/>
    <property type="match status" value="1"/>
</dbReference>
<dbReference type="FunFam" id="3.30.470.20:FF:000015">
    <property type="entry name" value="Phosphoribosylaminoimidazole-succinocarboxamide synthase"/>
    <property type="match status" value="1"/>
</dbReference>
<dbReference type="Gene3D" id="3.30.470.20">
    <property type="entry name" value="ATP-grasp fold, B domain"/>
    <property type="match status" value="1"/>
</dbReference>
<dbReference type="Gene3D" id="3.30.200.20">
    <property type="entry name" value="Phosphorylase Kinase, domain 1"/>
    <property type="match status" value="1"/>
</dbReference>
<dbReference type="HAMAP" id="MF_00137">
    <property type="entry name" value="SAICAR_synth"/>
    <property type="match status" value="1"/>
</dbReference>
<dbReference type="InterPro" id="IPR028923">
    <property type="entry name" value="SAICAR_synt/ADE2_N"/>
</dbReference>
<dbReference type="InterPro" id="IPR018236">
    <property type="entry name" value="SAICAR_synthetase_CS"/>
</dbReference>
<dbReference type="NCBIfam" id="NF009251">
    <property type="entry name" value="PRK12607.1"/>
    <property type="match status" value="1"/>
</dbReference>
<dbReference type="PANTHER" id="PTHR43700">
    <property type="entry name" value="PHOSPHORIBOSYLAMINOIMIDAZOLE-SUCCINOCARBOXAMIDE SYNTHASE"/>
    <property type="match status" value="1"/>
</dbReference>
<dbReference type="PANTHER" id="PTHR43700:SF1">
    <property type="entry name" value="PHOSPHORIBOSYLAMINOIMIDAZOLE-SUCCINOCARBOXAMIDE SYNTHASE"/>
    <property type="match status" value="1"/>
</dbReference>
<dbReference type="Pfam" id="PF01259">
    <property type="entry name" value="SAICAR_synt"/>
    <property type="match status" value="1"/>
</dbReference>
<dbReference type="SUPFAM" id="SSF56104">
    <property type="entry name" value="SAICAR synthase-like"/>
    <property type="match status" value="1"/>
</dbReference>
<dbReference type="PROSITE" id="PS01057">
    <property type="entry name" value="SAICAR_SYNTHETASE_1"/>
    <property type="match status" value="1"/>
</dbReference>
<dbReference type="PROSITE" id="PS01058">
    <property type="entry name" value="SAICAR_SYNTHETASE_2"/>
    <property type="match status" value="1"/>
</dbReference>
<proteinExistence type="inferred from homology"/>
<sequence>MPFCLTETSLPFGKKYKGKVRDTYDLGDQLILVTTDRQSAFDRCLAAVPYKGQVLNLTSVWWFKNTQSIVPNHLIAVPDPNVAIAKKCKIFPVEFVVRGYISGSTSTSLWTQYQKGVREYCGITFPDGLRKNQKLESPVITPTTKETIHDRPISPHEIVAEGWMTQEDWDETSSYALRLFQHGMEVAQQHGLILVDTKYEFGRDAEGRIVLVDEIHTPDSSRYWLFNGYQERFDAGKEPENIDKEFLRLWFVDHCDPYKDEVLPQAPQELIVTLASRYIQLYEMITGESFVYDSNPGPVNDRILHNIQHWLG</sequence>
<organism>
    <name type="scientific">Legionella pneumophila (strain Lens)</name>
    <dbReference type="NCBI Taxonomy" id="297245"/>
    <lineage>
        <taxon>Bacteria</taxon>
        <taxon>Pseudomonadati</taxon>
        <taxon>Pseudomonadota</taxon>
        <taxon>Gammaproteobacteria</taxon>
        <taxon>Legionellales</taxon>
        <taxon>Legionellaceae</taxon>
        <taxon>Legionella</taxon>
    </lineage>
</organism>
<evidence type="ECO:0000255" key="1">
    <source>
        <dbReference type="HAMAP-Rule" id="MF_00137"/>
    </source>
</evidence>
<comment type="catalytic activity">
    <reaction evidence="1">
        <text>5-amino-1-(5-phospho-D-ribosyl)imidazole-4-carboxylate + L-aspartate + ATP = (2S)-2-[5-amino-1-(5-phospho-beta-D-ribosyl)imidazole-4-carboxamido]succinate + ADP + phosphate + 2 H(+)</text>
        <dbReference type="Rhea" id="RHEA:22628"/>
        <dbReference type="ChEBI" id="CHEBI:15378"/>
        <dbReference type="ChEBI" id="CHEBI:29991"/>
        <dbReference type="ChEBI" id="CHEBI:30616"/>
        <dbReference type="ChEBI" id="CHEBI:43474"/>
        <dbReference type="ChEBI" id="CHEBI:58443"/>
        <dbReference type="ChEBI" id="CHEBI:77657"/>
        <dbReference type="ChEBI" id="CHEBI:456216"/>
        <dbReference type="EC" id="6.3.2.6"/>
    </reaction>
</comment>
<comment type="pathway">
    <text evidence="1">Purine metabolism; IMP biosynthesis via de novo pathway; 5-amino-1-(5-phospho-D-ribosyl)imidazole-4-carboxamide from 5-amino-1-(5-phospho-D-ribosyl)imidazole-4-carboxylate: step 1/2.</text>
</comment>
<comment type="similarity">
    <text evidence="1">Belongs to the SAICAR synthetase family.</text>
</comment>
<name>PUR7_LEGPL</name>
<protein>
    <recommendedName>
        <fullName evidence="1">Phosphoribosylaminoimidazole-succinocarboxamide synthase</fullName>
        <ecNumber evidence="1">6.3.2.6</ecNumber>
    </recommendedName>
    <alternativeName>
        <fullName evidence="1">SAICAR synthetase</fullName>
    </alternativeName>
</protein>
<reference key="1">
    <citation type="journal article" date="2004" name="Nat. Genet.">
        <title>Evidence in the Legionella pneumophila genome for exploitation of host cell functions and high genome plasticity.</title>
        <authorList>
            <person name="Cazalet C."/>
            <person name="Rusniok C."/>
            <person name="Brueggemann H."/>
            <person name="Zidane N."/>
            <person name="Magnier A."/>
            <person name="Ma L."/>
            <person name="Tichit M."/>
            <person name="Jarraud S."/>
            <person name="Bouchier C."/>
            <person name="Vandenesch F."/>
            <person name="Kunst F."/>
            <person name="Etienne J."/>
            <person name="Glaser P."/>
            <person name="Buchrieser C."/>
        </authorList>
    </citation>
    <scope>NUCLEOTIDE SEQUENCE [LARGE SCALE GENOMIC DNA]</scope>
    <source>
        <strain>Lens</strain>
    </source>
</reference>